<evidence type="ECO:0000250" key="1">
    <source>
        <dbReference type="UniProtKB" id="P62318"/>
    </source>
</evidence>
<evidence type="ECO:0000250" key="2">
    <source>
        <dbReference type="UniProtKB" id="P62320"/>
    </source>
</evidence>
<evidence type="ECO:0000255" key="3">
    <source>
        <dbReference type="PROSITE-ProRule" id="PRU01346"/>
    </source>
</evidence>
<evidence type="ECO:0000305" key="4"/>
<reference key="1">
    <citation type="submission" date="2004-05" db="EMBL/GenBank/DDBJ databases">
        <authorList>
            <consortium name="NIH - Xenopus Gene Collection (XGC) project"/>
        </authorList>
    </citation>
    <scope>NUCLEOTIDE SEQUENCE [LARGE SCALE MRNA]</scope>
    <source>
        <tissue>Embryo</tissue>
    </source>
</reference>
<organism>
    <name type="scientific">Xenopus laevis</name>
    <name type="common">African clawed frog</name>
    <dbReference type="NCBI Taxonomy" id="8355"/>
    <lineage>
        <taxon>Eukaryota</taxon>
        <taxon>Metazoa</taxon>
        <taxon>Chordata</taxon>
        <taxon>Craniata</taxon>
        <taxon>Vertebrata</taxon>
        <taxon>Euteleostomi</taxon>
        <taxon>Amphibia</taxon>
        <taxon>Batrachia</taxon>
        <taxon>Anura</taxon>
        <taxon>Pipoidea</taxon>
        <taxon>Pipidae</taxon>
        <taxon>Xenopodinae</taxon>
        <taxon>Xenopus</taxon>
        <taxon>Xenopus</taxon>
    </lineage>
</organism>
<feature type="chain" id="PRO_0000122216" description="Small nuclear ribonucleoprotein Sm D3">
    <location>
        <begin position="1"/>
        <end position="126"/>
    </location>
</feature>
<feature type="domain" description="Sm" evidence="3">
    <location>
        <begin position="5"/>
        <end position="77"/>
    </location>
</feature>
<feature type="repeat" description="1">
    <location>
        <begin position="110"/>
        <end position="111"/>
    </location>
</feature>
<feature type="repeat" description="2">
    <location>
        <begin position="112"/>
        <end position="113"/>
    </location>
</feature>
<feature type="repeat" description="3">
    <location>
        <begin position="114"/>
        <end position="115"/>
    </location>
</feature>
<feature type="repeat" description="4">
    <location>
        <begin position="116"/>
        <end position="117"/>
    </location>
</feature>
<feature type="repeat" description="5">
    <location>
        <begin position="118"/>
        <end position="119"/>
    </location>
</feature>
<feature type="region of interest" description="5 X 2 AA tandem repeats of [RM]-G">
    <location>
        <begin position="110"/>
        <end position="119"/>
    </location>
</feature>
<name>SMD3_XENLA</name>
<dbReference type="EMBL" id="BC070616">
    <property type="protein sequence ID" value="AAH70616.1"/>
    <property type="molecule type" value="mRNA"/>
</dbReference>
<dbReference type="RefSeq" id="NP_001084936.1">
    <property type="nucleotide sequence ID" value="NM_001091467.1"/>
</dbReference>
<dbReference type="SMR" id="P62323"/>
<dbReference type="BioGRID" id="101359">
    <property type="interactions" value="1"/>
</dbReference>
<dbReference type="DNASU" id="431993"/>
<dbReference type="GeneID" id="431993"/>
<dbReference type="KEGG" id="xla:431993"/>
<dbReference type="AGR" id="Xenbase:XB-GENE-1014508"/>
<dbReference type="CTD" id="431993"/>
<dbReference type="Xenbase" id="XB-GENE-1014508">
    <property type="gene designation" value="snrpd3.L"/>
</dbReference>
<dbReference type="OMA" id="HTITCET"/>
<dbReference type="OrthoDB" id="6425924at2759"/>
<dbReference type="Proteomes" id="UP000186698">
    <property type="component" value="Chromosome 1L"/>
</dbReference>
<dbReference type="Bgee" id="431993">
    <property type="expression patterns" value="Expressed in egg cell and 19 other cell types or tissues"/>
</dbReference>
<dbReference type="GO" id="GO:0071013">
    <property type="term" value="C:catalytic step 2 spliceosome"/>
    <property type="evidence" value="ECO:0000318"/>
    <property type="project" value="GO_Central"/>
</dbReference>
<dbReference type="GO" id="GO:0000243">
    <property type="term" value="C:commitment complex"/>
    <property type="evidence" value="ECO:0000318"/>
    <property type="project" value="GO_Central"/>
</dbReference>
<dbReference type="GO" id="GO:0005829">
    <property type="term" value="C:cytosol"/>
    <property type="evidence" value="ECO:0000250"/>
    <property type="project" value="UniProtKB"/>
</dbReference>
<dbReference type="GO" id="GO:0034709">
    <property type="term" value="C:methylosome"/>
    <property type="evidence" value="ECO:0000250"/>
    <property type="project" value="UniProtKB"/>
</dbReference>
<dbReference type="GO" id="GO:0005634">
    <property type="term" value="C:nucleus"/>
    <property type="evidence" value="ECO:0000250"/>
    <property type="project" value="UniProtKB"/>
</dbReference>
<dbReference type="GO" id="GO:0034715">
    <property type="term" value="C:pICln-Sm protein complex"/>
    <property type="evidence" value="ECO:0000250"/>
    <property type="project" value="UniProtKB"/>
</dbReference>
<dbReference type="GO" id="GO:0071011">
    <property type="term" value="C:precatalytic spliceosome"/>
    <property type="evidence" value="ECO:0000318"/>
    <property type="project" value="GO_Central"/>
</dbReference>
<dbReference type="GO" id="GO:0034719">
    <property type="term" value="C:SMN-Sm protein complex"/>
    <property type="evidence" value="ECO:0000250"/>
    <property type="project" value="UniProtKB"/>
</dbReference>
<dbReference type="GO" id="GO:0097526">
    <property type="term" value="C:spliceosomal tri-snRNP complex"/>
    <property type="evidence" value="ECO:0000318"/>
    <property type="project" value="GO_Central"/>
</dbReference>
<dbReference type="GO" id="GO:0005685">
    <property type="term" value="C:U1 snRNP"/>
    <property type="evidence" value="ECO:0000250"/>
    <property type="project" value="UniProtKB"/>
</dbReference>
<dbReference type="GO" id="GO:0005686">
    <property type="term" value="C:U2 snRNP"/>
    <property type="evidence" value="ECO:0000318"/>
    <property type="project" value="GO_Central"/>
</dbReference>
<dbReference type="GO" id="GO:0071007">
    <property type="term" value="C:U2-type catalytic step 2 spliceosome"/>
    <property type="evidence" value="ECO:0000250"/>
    <property type="project" value="UniProtKB"/>
</dbReference>
<dbReference type="GO" id="GO:0071005">
    <property type="term" value="C:U2-type precatalytic spliceosome"/>
    <property type="evidence" value="ECO:0000250"/>
    <property type="project" value="UniProtKB"/>
</dbReference>
<dbReference type="GO" id="GO:0005684">
    <property type="term" value="C:U2-type spliceosomal complex"/>
    <property type="evidence" value="ECO:0000250"/>
    <property type="project" value="UniProtKB"/>
</dbReference>
<dbReference type="GO" id="GO:0005687">
    <property type="term" value="C:U4 snRNP"/>
    <property type="evidence" value="ECO:0000250"/>
    <property type="project" value="UniProtKB"/>
</dbReference>
<dbReference type="GO" id="GO:0046540">
    <property type="term" value="C:U4/U6 x U5 tri-snRNP complex"/>
    <property type="evidence" value="ECO:0000250"/>
    <property type="project" value="UniProtKB"/>
</dbReference>
<dbReference type="GO" id="GO:0005682">
    <property type="term" value="C:U5 snRNP"/>
    <property type="evidence" value="ECO:0000318"/>
    <property type="project" value="GO_Central"/>
</dbReference>
<dbReference type="GO" id="GO:0071208">
    <property type="term" value="F:histone pre-mRNA DCP binding"/>
    <property type="evidence" value="ECO:0000250"/>
    <property type="project" value="UniProtKB"/>
</dbReference>
<dbReference type="GO" id="GO:0003723">
    <property type="term" value="F:RNA binding"/>
    <property type="evidence" value="ECO:0000318"/>
    <property type="project" value="GO_Central"/>
</dbReference>
<dbReference type="GO" id="GO:0000398">
    <property type="term" value="P:mRNA splicing, via spliceosome"/>
    <property type="evidence" value="ECO:0000250"/>
    <property type="project" value="UniProtKB"/>
</dbReference>
<dbReference type="GO" id="GO:0000387">
    <property type="term" value="P:spliceosomal snRNP assembly"/>
    <property type="evidence" value="ECO:0000250"/>
    <property type="project" value="UniProtKB"/>
</dbReference>
<dbReference type="CDD" id="cd01721">
    <property type="entry name" value="Sm_D3"/>
    <property type="match status" value="1"/>
</dbReference>
<dbReference type="FunFam" id="2.30.30.100:FF:000002">
    <property type="entry name" value="Small nuclear ribonucleoprotein Sm D3"/>
    <property type="match status" value="1"/>
</dbReference>
<dbReference type="Gene3D" id="2.30.30.100">
    <property type="match status" value="1"/>
</dbReference>
<dbReference type="InterPro" id="IPR027141">
    <property type="entry name" value="LSm4/Sm_D1/D3"/>
</dbReference>
<dbReference type="InterPro" id="IPR010920">
    <property type="entry name" value="LSM_dom_sf"/>
</dbReference>
<dbReference type="InterPro" id="IPR047575">
    <property type="entry name" value="Sm"/>
</dbReference>
<dbReference type="InterPro" id="IPR001163">
    <property type="entry name" value="Sm_dom_euk/arc"/>
</dbReference>
<dbReference type="InterPro" id="IPR034099">
    <property type="entry name" value="SmD3"/>
</dbReference>
<dbReference type="PANTHER" id="PTHR23338">
    <property type="entry name" value="SMALL NUCLEAR RIBONUCLEOPROTEIN SM"/>
    <property type="match status" value="1"/>
</dbReference>
<dbReference type="Pfam" id="PF01423">
    <property type="entry name" value="LSM"/>
    <property type="match status" value="1"/>
</dbReference>
<dbReference type="SMART" id="SM00651">
    <property type="entry name" value="Sm"/>
    <property type="match status" value="1"/>
</dbReference>
<dbReference type="SUPFAM" id="SSF50182">
    <property type="entry name" value="Sm-like ribonucleoproteins"/>
    <property type="match status" value="1"/>
</dbReference>
<dbReference type="PROSITE" id="PS52002">
    <property type="entry name" value="SM"/>
    <property type="match status" value="1"/>
</dbReference>
<protein>
    <recommendedName>
        <fullName>Small nuclear ribonucleoprotein Sm D3</fullName>
        <shortName>Sm-D3</shortName>
    </recommendedName>
    <alternativeName>
        <fullName>snRNP core protein D3</fullName>
    </alternativeName>
</protein>
<sequence>MSIGVPIKVLHEAEGHIVTCETNTGEVYRGKLIEAEDNMNCQMSNITVTYRDGRVAQLEQVYIRGSKIRFLILPDMLKNAPMLKSMKNKNQGSGAGRGKAAILKAQVAARGRGRGMGRGNIFQKRR</sequence>
<gene>
    <name type="primary">snrpd3</name>
</gene>
<accession>P62323</accession>
<proteinExistence type="evidence at transcript level"/>
<comment type="function">
    <text evidence="1 2">Plays a role in pre-mRNA splicing as a core component of the spliceosomal U1, U2, U4 and U5 small nuclear ribonucleoproteins (snRNPs), the building blocks of the spliceosome. Component of both the pre-catalytic spliceosome B complex and activated spliceosome C complexes. As a component of the minor spliceosome, involved in the splicing of U12-type introns in pre-mRNAs (By similarity). As part of the U7 snRNP it is involved in histone pre-mRNA 3'-end processing (By similarity).</text>
</comment>
<comment type="subunit">
    <text evidence="1">Core component of the spliceosomal U1, U2, U4 and U5 small nuclear ribonucleoproteins (snRNPs), the building blocks of the spliceosome. Most spliceosomal snRNPs contain a common set of Sm proteins, snrpb, snrpd1, snrpd2, snrpd3, snrpe, snrpf and snrpg that assemble in a heptameric protein ring on the Sm site of the small nuclear RNA to form the core snRNP. Component of the U1 snRNP. The U1 snRNP is composed of the U1 snRNA and the 7 core Sm proteins snrpb, snrpd1, snrpd2, snrpd3, snrpe, snrpf and snrpg, and at least three U1 snRNP-specific proteins snrnp70/U1-70K, snrpa/U1-A and snrpc/U1-C. Component of the U4/U6-U5 tri-snRNP complex composed of the U4, U6 and U5 snRNAs and at least prpf3, prpf4, prpf6, prpf8, prpf31, snrnp200, txnl4a, snrnp40, snrpb, snrpd1, snrpd2, snrpd3, snrpe, snrpf, snrpg, ddx23, cd2bp2, ppih, snu13, eftud2, sart1 and usp39, plus lsm2, lsm3, lsm4, lsm5, lsm6, lsm7 and lsm8. Component of the U7 snRNP complex, or U7 Sm protein core complex, that is composed of the U7 snRNA and at least lsm10, lsm11, snrpb, snrpd3, snrpe, snrpf and snrpg; the complex does not contain snrpd1 and snrpd2. Component of the minor spliceosome, which splices U12-type introns. Part of the SMN-Sm complex that contains smn1, gemin2/sip1, ddx20/gemin3, gemin4, gemin5, gemin6, gemin7, gemin8, strap/unrip and the Sm proteins snrpb, snrpd1, snrpd2, snrpd3, snrpe, snrpf and snrpg; catalyzes core snRNPs assembly. Forms a 6S pICln-Sm complex composed of clns1a/pICln, snrpd1, snrpd2, snrpe, snrpf and snrpg; ring-like structure where clns1a/pICln mimics additional Sm proteins and which is unable to assemble into the core snRNP.</text>
</comment>
<comment type="subcellular location">
    <subcellularLocation>
        <location evidence="1">Cytoplasm</location>
        <location evidence="1">Cytosol</location>
    </subcellularLocation>
    <subcellularLocation>
        <location evidence="1">Nucleus</location>
    </subcellularLocation>
    <text evidence="1">SMN-mediated assembly into core snRNPs occurs in the cytosol before SMN-mediated transport to the nucleus to be included in spliceosomes.</text>
</comment>
<comment type="PTM">
    <text evidence="1">Methylated on arginine residues by PRMT5 and PRMT7; probable asymmetric dimethylation which is required for assembly and biogenesis of snRNPs.</text>
</comment>
<comment type="similarity">
    <text evidence="4">Belongs to the snRNP core protein family.</text>
</comment>
<keyword id="KW-0963">Cytoplasm</keyword>
<keyword id="KW-0488">Methylation</keyword>
<keyword id="KW-0507">mRNA processing</keyword>
<keyword id="KW-0508">mRNA splicing</keyword>
<keyword id="KW-0539">Nucleus</keyword>
<keyword id="KW-1185">Reference proteome</keyword>
<keyword id="KW-0677">Repeat</keyword>
<keyword id="KW-0687">Ribonucleoprotein</keyword>
<keyword id="KW-0694">RNA-binding</keyword>
<keyword id="KW-0747">Spliceosome</keyword>